<dbReference type="EMBL" id="AE000520">
    <property type="protein sequence ID" value="AAC65469.1"/>
    <property type="molecule type" value="Genomic_DNA"/>
</dbReference>
<dbReference type="PIR" id="F71319">
    <property type="entry name" value="F71319"/>
</dbReference>
<dbReference type="RefSeq" id="WP_010881929.1">
    <property type="nucleotide sequence ID" value="NC_021490.2"/>
</dbReference>
<dbReference type="STRING" id="243276.TP_0480"/>
<dbReference type="EnsemblBacteria" id="AAC65469">
    <property type="protein sequence ID" value="AAC65469"/>
    <property type="gene ID" value="TP_0480"/>
</dbReference>
<dbReference type="KEGG" id="tpa:TP_0480"/>
<dbReference type="KEGG" id="tpw:TPANIC_0480"/>
<dbReference type="eggNOG" id="COG3216">
    <property type="taxonomic scope" value="Bacteria"/>
</dbReference>
<dbReference type="HOGENOM" id="CLU_128655_0_0_12"/>
<dbReference type="OrthoDB" id="370141at2"/>
<dbReference type="Proteomes" id="UP000000811">
    <property type="component" value="Chromosome"/>
</dbReference>
<dbReference type="GO" id="GO:0005886">
    <property type="term" value="C:plasma membrane"/>
    <property type="evidence" value="ECO:0007669"/>
    <property type="project" value="UniProtKB-SubCell"/>
</dbReference>
<dbReference type="InterPro" id="IPR019935">
    <property type="entry name" value="CHP03546"/>
</dbReference>
<dbReference type="NCBIfam" id="TIGR03546">
    <property type="entry name" value="TIGR03546 family protein"/>
    <property type="match status" value="1"/>
</dbReference>
<evidence type="ECO:0000255" key="1"/>
<evidence type="ECO:0000305" key="2"/>
<proteinExistence type="predicted"/>
<accession>O83493</accession>
<organism>
    <name type="scientific">Treponema pallidum (strain Nichols)</name>
    <dbReference type="NCBI Taxonomy" id="243276"/>
    <lineage>
        <taxon>Bacteria</taxon>
        <taxon>Pseudomonadati</taxon>
        <taxon>Spirochaetota</taxon>
        <taxon>Spirochaetia</taxon>
        <taxon>Spirochaetales</taxon>
        <taxon>Treponemataceae</taxon>
        <taxon>Treponema</taxon>
    </lineage>
</organism>
<feature type="chain" id="PRO_0000202262" description="Uncharacterized protein TP_0480">
    <location>
        <begin position="1"/>
        <end position="162"/>
    </location>
</feature>
<feature type="transmembrane region" description="Helical" evidence="1">
    <location>
        <begin position="28"/>
        <end position="50"/>
    </location>
</feature>
<feature type="transmembrane region" description="Helical" evidence="1">
    <location>
        <begin position="57"/>
        <end position="76"/>
    </location>
</feature>
<feature type="transmembrane region" description="Helical" evidence="1">
    <location>
        <begin position="108"/>
        <end position="130"/>
    </location>
</feature>
<reference key="1">
    <citation type="journal article" date="1998" name="Science">
        <title>Complete genome sequence of Treponema pallidum, the syphilis spirochete.</title>
        <authorList>
            <person name="Fraser C.M."/>
            <person name="Norris S.J."/>
            <person name="Weinstock G.M."/>
            <person name="White O."/>
            <person name="Sutton G.G."/>
            <person name="Dodson R.J."/>
            <person name="Gwinn M.L."/>
            <person name="Hickey E.K."/>
            <person name="Clayton R.A."/>
            <person name="Ketchum K.A."/>
            <person name="Sodergren E."/>
            <person name="Hardham J.M."/>
            <person name="McLeod M.P."/>
            <person name="Salzberg S.L."/>
            <person name="Peterson J.D."/>
            <person name="Khalak H.G."/>
            <person name="Richardson D.L."/>
            <person name="Howell J.K."/>
            <person name="Chidambaram M."/>
            <person name="Utterback T.R."/>
            <person name="McDonald L.A."/>
            <person name="Artiach P."/>
            <person name="Bowman C."/>
            <person name="Cotton M.D."/>
            <person name="Fujii C."/>
            <person name="Garland S.A."/>
            <person name="Hatch B."/>
            <person name="Horst K."/>
            <person name="Roberts K.M."/>
            <person name="Sandusky M."/>
            <person name="Weidman J.F."/>
            <person name="Smith H.O."/>
            <person name="Venter J.C."/>
        </authorList>
    </citation>
    <scope>NUCLEOTIDE SEQUENCE [LARGE SCALE GENOMIC DNA]</scope>
    <source>
        <strain>Nichols</strain>
    </source>
</reference>
<sequence>MIRALFSLFRSLHANTHPADLAHAAALALALALLPRSSLLWYLLFAVCFFIRLNRGLLLLSLVLFGFVVPSFDPWLDSLGNWALCLPRLQPVYRALIEIPFVGLARFYNTMIAGGLVAGALCYLPCYALARCAVTAYRTYLYPKIHHATIFFLVRNAPLCKR</sequence>
<protein>
    <recommendedName>
        <fullName>Uncharacterized protein TP_0480</fullName>
    </recommendedName>
</protein>
<gene>
    <name type="ordered locus">TP_0480</name>
</gene>
<comment type="subcellular location">
    <subcellularLocation>
        <location evidence="2">Cell membrane</location>
        <topology evidence="2">Multi-pass membrane protein</topology>
    </subcellularLocation>
</comment>
<name>Y480_TREPA</name>
<keyword id="KW-1003">Cell membrane</keyword>
<keyword id="KW-0472">Membrane</keyword>
<keyword id="KW-1185">Reference proteome</keyword>
<keyword id="KW-0812">Transmembrane</keyword>
<keyword id="KW-1133">Transmembrane helix</keyword>